<feature type="chain" id="PRO_0000071453" description="Serine/threonine-protein phosphatase 2A 56 kDa regulatory subunit delta isoform">
    <location>
        <begin position="1"/>
        <end position="586"/>
    </location>
</feature>
<feature type="repeat" description="1">
    <location>
        <begin position="21"/>
        <end position="22"/>
    </location>
</feature>
<feature type="repeat" description="2">
    <location>
        <begin position="23"/>
        <end position="24"/>
    </location>
</feature>
<feature type="repeat" description="3">
    <location>
        <begin position="25"/>
        <end position="26"/>
    </location>
</feature>
<feature type="repeat" description="4">
    <location>
        <begin position="27"/>
        <end position="28"/>
    </location>
</feature>
<feature type="repeat" description="5">
    <location>
        <begin position="29"/>
        <end position="30"/>
    </location>
</feature>
<feature type="repeat" description="6">
    <location>
        <begin position="31"/>
        <end position="32"/>
    </location>
</feature>
<feature type="repeat" description="7; approximate">
    <location>
        <begin position="33"/>
        <end position="34"/>
    </location>
</feature>
<feature type="repeat" description="8">
    <location>
        <begin position="35"/>
        <end position="36"/>
    </location>
</feature>
<feature type="region of interest" description="Disordered" evidence="4">
    <location>
        <begin position="1"/>
        <end position="80"/>
    </location>
</feature>
<feature type="region of interest" description="8 X 2 AA approximate tandem repeats of Q-P">
    <location>
        <begin position="21"/>
        <end position="36"/>
    </location>
</feature>
<feature type="short sequence motif" description="SH3-binding; class I" evidence="3">
    <location>
        <begin position="507"/>
        <end position="514"/>
    </location>
</feature>
<feature type="short sequence motif" description="Nuclear localization signal" evidence="3">
    <location>
        <begin position="532"/>
        <end position="549"/>
    </location>
</feature>
<feature type="compositionally biased region" description="Pro residues" evidence="4">
    <location>
        <begin position="23"/>
        <end position="35"/>
    </location>
</feature>
<feature type="compositionally biased region" description="Low complexity" evidence="4">
    <location>
        <begin position="36"/>
        <end position="45"/>
    </location>
</feature>
<feature type="modified residue" description="Phosphothreonine" evidence="2">
    <location>
        <position position="47"/>
    </location>
</feature>
<feature type="modified residue" description="Phosphoserine" evidence="2">
    <location>
        <position position="72"/>
    </location>
</feature>
<feature type="modified residue" description="Phosphoserine" evidence="2">
    <location>
        <position position="73"/>
    </location>
</feature>
<feature type="modified residue" description="Phosphoserine" evidence="2">
    <location>
        <position position="74"/>
    </location>
</feature>
<feature type="modified residue" description="Phosphoserine" evidence="2">
    <location>
        <position position="557"/>
    </location>
</feature>
<feature type="modified residue" description="Phosphoserine" evidence="2">
    <location>
        <position position="582"/>
    </location>
</feature>
<dbReference type="EMBL" id="U38193">
    <property type="protein sequence ID" value="AAC48532.1"/>
    <property type="molecule type" value="mRNA"/>
</dbReference>
<dbReference type="EMBL" id="U38195">
    <property type="protein sequence ID" value="AAC48534.1"/>
    <property type="molecule type" value="mRNA"/>
</dbReference>
<dbReference type="RefSeq" id="NP_001076223.1">
    <property type="nucleotide sequence ID" value="NM_001082754.1"/>
</dbReference>
<dbReference type="SMR" id="Q28653"/>
<dbReference type="FunCoup" id="Q28653">
    <property type="interactions" value="1919"/>
</dbReference>
<dbReference type="STRING" id="9986.ENSOCUP00000001342"/>
<dbReference type="PaxDb" id="9986-ENSOCUP00000001342"/>
<dbReference type="GeneID" id="100009533"/>
<dbReference type="KEGG" id="ocu:100009533"/>
<dbReference type="CTD" id="5528"/>
<dbReference type="eggNOG" id="KOG2085">
    <property type="taxonomic scope" value="Eukaryota"/>
</dbReference>
<dbReference type="InParanoid" id="Q28653"/>
<dbReference type="OrthoDB" id="10264446at2759"/>
<dbReference type="BRENDA" id="3.1.3.16">
    <property type="organism ID" value="1749"/>
</dbReference>
<dbReference type="Proteomes" id="UP000001811">
    <property type="component" value="Unplaced"/>
</dbReference>
<dbReference type="GO" id="GO:0005829">
    <property type="term" value="C:cytosol"/>
    <property type="evidence" value="ECO:0007669"/>
    <property type="project" value="TreeGrafter"/>
</dbReference>
<dbReference type="GO" id="GO:0005634">
    <property type="term" value="C:nucleus"/>
    <property type="evidence" value="ECO:0007669"/>
    <property type="project" value="UniProtKB-SubCell"/>
</dbReference>
<dbReference type="GO" id="GO:0000159">
    <property type="term" value="C:protein phosphatase type 2A complex"/>
    <property type="evidence" value="ECO:0007669"/>
    <property type="project" value="InterPro"/>
</dbReference>
<dbReference type="GO" id="GO:0072542">
    <property type="term" value="F:protein phosphatase activator activity"/>
    <property type="evidence" value="ECO:0007669"/>
    <property type="project" value="TreeGrafter"/>
</dbReference>
<dbReference type="GO" id="GO:0007165">
    <property type="term" value="P:signal transduction"/>
    <property type="evidence" value="ECO:0007669"/>
    <property type="project" value="InterPro"/>
</dbReference>
<dbReference type="FunFam" id="1.25.10.10:FF:000003">
    <property type="entry name" value="Serine/threonine-protein phosphatase 2A 56 kDa regulatory subunit"/>
    <property type="match status" value="1"/>
</dbReference>
<dbReference type="Gene3D" id="1.25.10.10">
    <property type="entry name" value="Leucine-rich Repeat Variant"/>
    <property type="match status" value="1"/>
</dbReference>
<dbReference type="InterPro" id="IPR011989">
    <property type="entry name" value="ARM-like"/>
</dbReference>
<dbReference type="InterPro" id="IPR016024">
    <property type="entry name" value="ARM-type_fold"/>
</dbReference>
<dbReference type="InterPro" id="IPR002554">
    <property type="entry name" value="PP2A_B56"/>
</dbReference>
<dbReference type="PANTHER" id="PTHR10257">
    <property type="entry name" value="SERINE/THREONINE PROTEIN PHOSPHATASE 2A PP2A REGULATORY SUBUNIT B"/>
    <property type="match status" value="1"/>
</dbReference>
<dbReference type="PANTHER" id="PTHR10257:SF89">
    <property type="entry name" value="SERINE_THREONINE-PROTEIN PHOSPHATASE 2A 56 KDA REGULATORY SUBUNIT DELTA ISOFORM"/>
    <property type="match status" value="1"/>
</dbReference>
<dbReference type="Pfam" id="PF01603">
    <property type="entry name" value="B56"/>
    <property type="match status" value="1"/>
</dbReference>
<dbReference type="PIRSF" id="PIRSF028043">
    <property type="entry name" value="PP2A_B56"/>
    <property type="match status" value="1"/>
</dbReference>
<dbReference type="SUPFAM" id="SSF48371">
    <property type="entry name" value="ARM repeat"/>
    <property type="match status" value="1"/>
</dbReference>
<accession>Q28653</accession>
<accession>Q28655</accession>
<evidence type="ECO:0000250" key="1"/>
<evidence type="ECO:0000250" key="2">
    <source>
        <dbReference type="UniProtKB" id="Q14738"/>
    </source>
</evidence>
<evidence type="ECO:0000255" key="3"/>
<evidence type="ECO:0000256" key="4">
    <source>
        <dbReference type="SAM" id="MobiDB-lite"/>
    </source>
</evidence>
<evidence type="ECO:0000305" key="5"/>
<protein>
    <recommendedName>
        <fullName>Serine/threonine-protein phosphatase 2A 56 kDa regulatory subunit delta isoform</fullName>
    </recommendedName>
    <alternativeName>
        <fullName>PP2A B subunit isoform B'-delta</fullName>
    </alternativeName>
    <alternativeName>
        <fullName>PP2A B subunit isoform B'-gamma</fullName>
    </alternativeName>
    <alternativeName>
        <fullName>PP2A B subunit isoform B56-delta</fullName>
    </alternativeName>
    <alternativeName>
        <fullName>PP2A B subunit isoform PR61-delta</fullName>
    </alternativeName>
    <alternativeName>
        <fullName>PP2A B subunit isoform R5-delta</fullName>
    </alternativeName>
</protein>
<comment type="function">
    <text>The B regulatory subunit might modulate substrate selectivity and catalytic activity, and might also direct the localization of the catalytic enzyme to a particular subcellular compartment.</text>
</comment>
<comment type="subunit">
    <text evidence="1 2">PP2A consists of a common heterodimeric core enzyme, composed of a 36 kDa catalytic subunit (subunit C) and a 65 kDa constant regulatory subunit (PR65 or subunit A), that associates with a variety of regulatory subunits. Proteins that associate with the core dimer include three families of regulatory subunits B (the R2/B/PR55/B55, R3/B''/PR72/PR130/PR59 and R5/B'/B56 families), the 48 kDa variable regulatory subunit, viral proteins, and cell signaling molecules. Interacts with the PP2A A subunit PPP2R1A (By similarity). Interacts with SGO1 (By similarity). Interacts with ADCY8 (By similarity).</text>
</comment>
<comment type="subcellular location">
    <subcellularLocation>
        <location evidence="1">Nucleus</location>
    </subcellularLocation>
</comment>
<comment type="tissue specificity">
    <text>Highly expressed in brain.</text>
</comment>
<comment type="similarity">
    <text evidence="5">Belongs to the phosphatase 2A regulatory subunit B56 family.</text>
</comment>
<comment type="caution">
    <text evidence="5">Nomenclature used in PubMed:8576224 refers to PP2A B subunit B' gamma isoform, which is cited as PP2A B subunit delta-PR61 isoform in later publications.</text>
</comment>
<sequence length="586" mass="68090">MSPSPSSSGKDGGGENAEEAQPQPQPQPQPQPQSQPPSSNKRPSNSTPPPTQLSKIKYSGGPQIVKKERRQSSSRFNLSKNRELQKLPALKDSPTQEREELFIQKLRQCCVLFDFVSDPLSDLKFKEVKRAGLNEMVEYITHSRDVVTEAIYPEAVTMFSVNLFRTLPPSSNPTGAEFDPEEDEPTLEAAWPHLQLVYEFFLRFLESPDFQPNIAKKYIDQKFVLALLDLFDSEDPRERDFLKTILHRIYGKFLGLRAYIRRQINHIFYRFIYETEHHNGIAELLEILGSIINGFALPLKEEHKMFLIRVLLPLHKVKSLSVYHPQLAYCVVQFLEKESSLTEPVIVGLLKFWPKTHSPKEVMFLNELEEILDVIEPSEFSKVMEPLFRQLAKCVSSPHFQVAERALYYWNNEYIMSLISDNAARVLPIMFPALYRNSKSHWNKTIHGLIYNALKLFMEMNQKLFDDCTQQYKAEKQKGRFRMKEREEMWQKIEELARLNPQYPMFRAPPPLPPVYSMETETPTAEDIQLLKRTVETEAVQMLKDIKKEKVLLRRKSELPQDVYTIKALEAHKRAEEFLTASQEAL</sequence>
<name>2A5D_RABIT</name>
<reference key="1">
    <citation type="journal article" date="1996" name="J. Biol. Chem.">
        <title>High complexity in the expression of the B' subunit of protein phosphatase 2A0. Evidence for the existence of at least seven novel isoforms.</title>
        <authorList>
            <person name="Csortos C."/>
            <person name="Zolnierowicz S."/>
            <person name="Bako E."/>
            <person name="Durbin S.D."/>
            <person name="Depaoli-Roach A.A."/>
        </authorList>
    </citation>
    <scope>NUCLEOTIDE SEQUENCE [MRNA]</scope>
    <source>
        <strain>New Zealand</strain>
        <tissue>Brain</tissue>
        <tissue>Skeletal muscle</tissue>
    </source>
</reference>
<keyword id="KW-0539">Nucleus</keyword>
<keyword id="KW-0597">Phosphoprotein</keyword>
<keyword id="KW-1185">Reference proteome</keyword>
<keyword id="KW-0677">Repeat</keyword>
<organism>
    <name type="scientific">Oryctolagus cuniculus</name>
    <name type="common">Rabbit</name>
    <dbReference type="NCBI Taxonomy" id="9986"/>
    <lineage>
        <taxon>Eukaryota</taxon>
        <taxon>Metazoa</taxon>
        <taxon>Chordata</taxon>
        <taxon>Craniata</taxon>
        <taxon>Vertebrata</taxon>
        <taxon>Euteleostomi</taxon>
        <taxon>Mammalia</taxon>
        <taxon>Eutheria</taxon>
        <taxon>Euarchontoglires</taxon>
        <taxon>Glires</taxon>
        <taxon>Lagomorpha</taxon>
        <taxon>Leporidae</taxon>
        <taxon>Oryctolagus</taxon>
    </lineage>
</organism>
<gene>
    <name type="primary">PPP2R5D</name>
</gene>
<proteinExistence type="evidence at transcript level"/>